<keyword id="KW-0025">Alternative splicing</keyword>
<keyword id="KW-0472">Membrane</keyword>
<keyword id="KW-0496">Mitochondrion</keyword>
<keyword id="KW-0999">Mitochondrion inner membrane</keyword>
<keyword id="KW-1185">Reference proteome</keyword>
<keyword id="KW-0677">Repeat</keyword>
<keyword id="KW-0346">Stress response</keyword>
<keyword id="KW-0812">Transmembrane</keyword>
<keyword id="KW-1133">Transmembrane helix</keyword>
<keyword id="KW-0813">Transport</keyword>
<dbReference type="EMBL" id="AB021706">
    <property type="protein sequence ID" value="BAA36222.1"/>
    <property type="molecule type" value="mRNA"/>
</dbReference>
<dbReference type="EMBL" id="JQ937241">
    <property type="protein sequence ID" value="AFI41209.1"/>
    <property type="molecule type" value="mRNA"/>
</dbReference>
<dbReference type="EMBL" id="AB016885">
    <property type="protein sequence ID" value="BAB09640.1"/>
    <property type="molecule type" value="Genomic_DNA"/>
</dbReference>
<dbReference type="EMBL" id="CP002688">
    <property type="protein sequence ID" value="AED97124.1"/>
    <property type="molecule type" value="Genomic_DNA"/>
</dbReference>
<dbReference type="EMBL" id="CP002688">
    <property type="protein sequence ID" value="AED97125.1"/>
    <property type="molecule type" value="Genomic_DNA"/>
</dbReference>
<dbReference type="EMBL" id="AY088200">
    <property type="protein sequence ID" value="AAM65742.1"/>
    <property type="molecule type" value="mRNA"/>
</dbReference>
<dbReference type="EMBL" id="BX831274">
    <property type="status" value="NOT_ANNOTATED_CDS"/>
    <property type="molecule type" value="mRNA"/>
</dbReference>
<dbReference type="RefSeq" id="NP_568894.1">
    <molecule id="Q9ZWG1-1"/>
    <property type="nucleotide sequence ID" value="NM_125287.5"/>
</dbReference>
<dbReference type="RefSeq" id="NP_974962.1">
    <molecule id="Q9ZWG1-2"/>
    <property type="nucleotide sequence ID" value="NM_203233.1"/>
</dbReference>
<dbReference type="SMR" id="Q9ZWG1"/>
<dbReference type="FunCoup" id="Q9ZWG1">
    <property type="interactions" value="156"/>
</dbReference>
<dbReference type="STRING" id="3702.Q9ZWG1"/>
<dbReference type="TCDB" id="2.A.29.3.8">
    <property type="family name" value="the mitochondrial carrier (mc) family"/>
</dbReference>
<dbReference type="PaxDb" id="3702-AT5G58970.1"/>
<dbReference type="ProteomicsDB" id="226124">
    <molecule id="Q9ZWG1-1"/>
</dbReference>
<dbReference type="EnsemblPlants" id="AT5G58970.1">
    <molecule id="Q9ZWG1-1"/>
    <property type="protein sequence ID" value="AT5G58970.1"/>
    <property type="gene ID" value="AT5G58970"/>
</dbReference>
<dbReference type="EnsemblPlants" id="AT5G58970.2">
    <molecule id="Q9ZWG1-2"/>
    <property type="protein sequence ID" value="AT5G58970.2"/>
    <property type="gene ID" value="AT5G58970"/>
</dbReference>
<dbReference type="GeneID" id="836014"/>
<dbReference type="Gramene" id="AT5G58970.1">
    <molecule id="Q9ZWG1-1"/>
    <property type="protein sequence ID" value="AT5G58970.1"/>
    <property type="gene ID" value="AT5G58970"/>
</dbReference>
<dbReference type="Gramene" id="AT5G58970.2">
    <molecule id="Q9ZWG1-2"/>
    <property type="protein sequence ID" value="AT5G58970.2"/>
    <property type="gene ID" value="AT5G58970"/>
</dbReference>
<dbReference type="KEGG" id="ath:AT5G58970"/>
<dbReference type="Araport" id="AT5G58970"/>
<dbReference type="TAIR" id="AT5G58970">
    <property type="gene designation" value="UCP2"/>
</dbReference>
<dbReference type="eggNOG" id="KOG0753">
    <property type="taxonomic scope" value="Eukaryota"/>
</dbReference>
<dbReference type="HOGENOM" id="CLU_015166_14_2_1"/>
<dbReference type="InParanoid" id="Q9ZWG1"/>
<dbReference type="OMA" id="MMVTKKR"/>
<dbReference type="OrthoDB" id="448427at2759"/>
<dbReference type="PhylomeDB" id="Q9ZWG1"/>
<dbReference type="PRO" id="PR:Q9ZWG1"/>
<dbReference type="Proteomes" id="UP000006548">
    <property type="component" value="Chromosome 5"/>
</dbReference>
<dbReference type="ExpressionAtlas" id="Q9ZWG1">
    <property type="expression patterns" value="baseline and differential"/>
</dbReference>
<dbReference type="GO" id="GO:0005794">
    <property type="term" value="C:Golgi apparatus"/>
    <property type="evidence" value="ECO:0000314"/>
    <property type="project" value="TAIR"/>
</dbReference>
<dbReference type="GO" id="GO:0005743">
    <property type="term" value="C:mitochondrial inner membrane"/>
    <property type="evidence" value="ECO:0007669"/>
    <property type="project" value="UniProtKB-SubCell"/>
</dbReference>
<dbReference type="GO" id="GO:0005886">
    <property type="term" value="C:plasma membrane"/>
    <property type="evidence" value="ECO:0007005"/>
    <property type="project" value="TAIR"/>
</dbReference>
<dbReference type="GO" id="GO:0015171">
    <property type="term" value="F:amino acid transmembrane transporter activity"/>
    <property type="evidence" value="ECO:0000314"/>
    <property type="project" value="TAIR"/>
</dbReference>
<dbReference type="GO" id="GO:0003333">
    <property type="term" value="P:amino acid transmembrane transport"/>
    <property type="evidence" value="ECO:0000314"/>
    <property type="project" value="TAIR"/>
</dbReference>
<dbReference type="FunFam" id="1.50.40.10:FF:000019">
    <property type="entry name" value="Mitochondrial uncoupling protein 1"/>
    <property type="match status" value="1"/>
</dbReference>
<dbReference type="Gene3D" id="1.50.40.10">
    <property type="entry name" value="Mitochondrial carrier domain"/>
    <property type="match status" value="1"/>
</dbReference>
<dbReference type="InterPro" id="IPR002067">
    <property type="entry name" value="Mit_carrier"/>
</dbReference>
<dbReference type="InterPro" id="IPR050391">
    <property type="entry name" value="Mito_Metabolite_Transporter"/>
</dbReference>
<dbReference type="InterPro" id="IPR018108">
    <property type="entry name" value="Mitochondrial_sb/sol_carrier"/>
</dbReference>
<dbReference type="InterPro" id="IPR023395">
    <property type="entry name" value="Mt_carrier_dom_sf"/>
</dbReference>
<dbReference type="PANTHER" id="PTHR45618">
    <property type="entry name" value="MITOCHONDRIAL DICARBOXYLATE CARRIER-RELATED"/>
    <property type="match status" value="1"/>
</dbReference>
<dbReference type="Pfam" id="PF00153">
    <property type="entry name" value="Mito_carr"/>
    <property type="match status" value="3"/>
</dbReference>
<dbReference type="PRINTS" id="PR00784">
    <property type="entry name" value="MTUNCOUPLING"/>
</dbReference>
<dbReference type="SUPFAM" id="SSF103506">
    <property type="entry name" value="Mitochondrial carrier"/>
    <property type="match status" value="1"/>
</dbReference>
<dbReference type="PROSITE" id="PS50920">
    <property type="entry name" value="SOLCAR"/>
    <property type="match status" value="3"/>
</dbReference>
<feature type="chain" id="PRO_0000420256" description="Mitochondrial uncoupling protein 2">
    <location>
        <begin position="1"/>
        <end position="305"/>
    </location>
</feature>
<feature type="transmembrane region" description="Helical; Name=1" evidence="2">
    <location>
        <begin position="16"/>
        <end position="36"/>
    </location>
</feature>
<feature type="transmembrane region" description="Helical; Name=2" evidence="2">
    <location>
        <begin position="73"/>
        <end position="93"/>
    </location>
</feature>
<feature type="transmembrane region" description="Helical; Name=3" evidence="2">
    <location>
        <begin position="120"/>
        <end position="140"/>
    </location>
</feature>
<feature type="transmembrane region" description="Helical; Name=4" evidence="2">
    <location>
        <begin position="179"/>
        <end position="199"/>
    </location>
</feature>
<feature type="transmembrane region" description="Helical; Name=5" evidence="2">
    <location>
        <begin position="220"/>
        <end position="240"/>
    </location>
</feature>
<feature type="transmembrane region" description="Helical; Name=6" evidence="2">
    <location>
        <begin position="270"/>
        <end position="290"/>
    </location>
</feature>
<feature type="repeat" description="Solcar 1">
    <location>
        <begin position="10"/>
        <end position="104"/>
    </location>
</feature>
<feature type="repeat" description="Solcar 2">
    <location>
        <begin position="114"/>
        <end position="205"/>
    </location>
</feature>
<feature type="repeat" description="Solcar 3">
    <location>
        <begin position="214"/>
        <end position="297"/>
    </location>
</feature>
<feature type="splice variant" id="VSP_044433" description="In isoform 2." evidence="4">
    <original>KSRMMGDSTYRNTVDCFIKTMKTEGIMAFYKG</original>
    <variation>SIHFRLLHKSTTRLFGFRLIMCGSAYIYNKFQ</variation>
    <location>
        <begin position="241"/>
        <end position="272"/>
    </location>
</feature>
<feature type="splice variant" id="VSP_044434" description="In isoform 2." evidence="4">
    <location>
        <begin position="273"/>
        <end position="305"/>
    </location>
</feature>
<sequence length="305" mass="33442">MADFKPRIEISFLETFICSAFAACFAELCTIPLDTAKVRLQLQRKIPTGDGENLPKYRGSIGTLATIAREEGISGLWKGVIAGLHRQCIYGGLRIGLYEPVKTLLVGSDFIGDIPLYQKILAALLTGAIAIIVANPTDLVKVRLQSEGKLPAGVPRRYAGAVDAYFTIVKLEGVSALWTGLGPNIARNAIVNAAELASYDQIKETIMKIPFFRDSVLTHLLAGLAAGFFAVCIGSPIDVVKSRMMGDSTYRNTVDCFIKTMKTEGIMAFYKGFLPNFTRLGTWNAIMFLTLEQVKKVFLREVLYD</sequence>
<accession>Q9ZWG1</accession>
<accession>F4KGF2</accession>
<reference key="1">
    <citation type="journal article" date="1999" name="Plant Cell Physiol.">
        <title>AtUCP2: a novel isoform of the mitochondrial uncoupling protein of Arabidopsis thaliana.</title>
        <authorList>
            <person name="Watanabe A."/>
            <person name="Nakazono M."/>
            <person name="Tsutsumi N."/>
            <person name="Hirai A."/>
        </authorList>
    </citation>
    <scope>NUCLEOTIDE SEQUENCE [MRNA] (ISOFORM 1)</scope>
    <source>
        <strain>cv. Columbia</strain>
        <tissue>Leaf</tissue>
    </source>
</reference>
<reference key="2">
    <citation type="journal article" date="2012" name="Plant Physiol.">
        <title>Isolation and proteomic characterization of the Arabidopsis Golgi defines functional and novel components involved in plant cell wall biosynthesis.</title>
        <authorList>
            <person name="Parsons H.T."/>
            <person name="Christiansen K."/>
            <person name="Knierim B."/>
            <person name="Carroll A."/>
            <person name="Ito J."/>
            <person name="Batth T.S."/>
            <person name="Smith-Moritz A.M."/>
            <person name="Morrison S."/>
            <person name="McInerney P."/>
            <person name="Hadi M.Z."/>
            <person name="Auer M."/>
            <person name="Mukhopadhyay A."/>
            <person name="Petzold C.J."/>
            <person name="Scheller H.V."/>
            <person name="Loque D."/>
            <person name="Heazlewood J.L."/>
        </authorList>
    </citation>
    <scope>NUCLEOTIDE SEQUENCE [MRNA] (ISOFORM 1)</scope>
    <source>
        <strain>cv. Landsberg erecta</strain>
    </source>
</reference>
<reference key="3">
    <citation type="journal article" date="1998" name="DNA Res.">
        <title>Structural analysis of Arabidopsis thaliana chromosome 5. VIII. Sequence features of the regions of 1,081,958 bp covered by seventeen physically assigned P1 and TAC clones.</title>
        <authorList>
            <person name="Asamizu E."/>
            <person name="Sato S."/>
            <person name="Kaneko T."/>
            <person name="Nakamura Y."/>
            <person name="Kotani H."/>
            <person name="Miyajima N."/>
            <person name="Tabata S."/>
        </authorList>
    </citation>
    <scope>NUCLEOTIDE SEQUENCE [LARGE SCALE GENOMIC DNA]</scope>
    <source>
        <strain>cv. Columbia</strain>
    </source>
</reference>
<reference key="4">
    <citation type="journal article" date="2017" name="Plant J.">
        <title>Araport11: a complete reannotation of the Arabidopsis thaliana reference genome.</title>
        <authorList>
            <person name="Cheng C.Y."/>
            <person name="Krishnakumar V."/>
            <person name="Chan A.P."/>
            <person name="Thibaud-Nissen F."/>
            <person name="Schobel S."/>
            <person name="Town C.D."/>
        </authorList>
    </citation>
    <scope>GENOME REANNOTATION</scope>
    <source>
        <strain>cv. Columbia</strain>
    </source>
</reference>
<reference key="5">
    <citation type="journal article" date="2004" name="Genome Res.">
        <title>Whole genome sequence comparisons and 'full-length' cDNA sequences: a combined approach to evaluate and improve Arabidopsis genome annotation.</title>
        <authorList>
            <person name="Castelli V."/>
            <person name="Aury J.-M."/>
            <person name="Jaillon O."/>
            <person name="Wincker P."/>
            <person name="Clepet C."/>
            <person name="Menard M."/>
            <person name="Cruaud C."/>
            <person name="Quetier F."/>
            <person name="Scarpelli C."/>
            <person name="Schaechter V."/>
            <person name="Temple G."/>
            <person name="Caboche M."/>
            <person name="Weissenbach J."/>
            <person name="Salanoubat M."/>
        </authorList>
    </citation>
    <scope>NUCLEOTIDE SEQUENCE [LARGE SCALE MRNA] (ISOFORM 2)</scope>
    <source>
        <strain>cv. Columbia</strain>
    </source>
</reference>
<reference key="6">
    <citation type="submission" date="2002-03" db="EMBL/GenBank/DDBJ databases">
        <title>Full-length cDNA from Arabidopsis thaliana.</title>
        <authorList>
            <person name="Brover V.V."/>
            <person name="Troukhan M.E."/>
            <person name="Alexandrov N.A."/>
            <person name="Lu Y.-P."/>
            <person name="Flavell R.B."/>
            <person name="Feldmann K.A."/>
        </authorList>
    </citation>
    <scope>NUCLEOTIDE SEQUENCE [LARGE SCALE MRNA] (ISOFORM 1)</scope>
</reference>
<reference key="7">
    <citation type="journal article" date="2005" name="Plant Mol. Biol.">
        <title>Stress-induced co-expression of alternative respiratory chain components in Arabidopsis thaliana.</title>
        <authorList>
            <person name="Clifton R."/>
            <person name="Lister R."/>
            <person name="Parker K.L."/>
            <person name="Sappl P.G."/>
            <person name="Elhafez D."/>
            <person name="Millar A.H."/>
            <person name="Day D.A."/>
            <person name="Whelan J."/>
        </authorList>
    </citation>
    <scope>INDUCTION BY CHLORAMPHENICOL</scope>
</reference>
<reference key="8">
    <citation type="journal article" date="2006" name="J. Exp. Bot.">
        <title>The plant energy-dissipating mitochondrial systems: depicting the genomic structure and the expression profiles of the gene families of uncoupling protein and alternative oxidase in monocots and dicots.</title>
        <authorList>
            <person name="Borecky J."/>
            <person name="Nogueira F.T."/>
            <person name="de Oliveira K.A."/>
            <person name="Maia I.G."/>
            <person name="Vercesi A.E."/>
            <person name="Arruda P."/>
        </authorList>
    </citation>
    <scope>GENE FAMILY</scope>
    <scope>NOMENCLATURE</scope>
</reference>
<proteinExistence type="evidence at transcript level"/>
<protein>
    <recommendedName>
        <fullName>Mitochondrial uncoupling protein 2</fullName>
        <shortName>AtPUMP2</shortName>
    </recommendedName>
</protein>
<evidence type="ECO:0000250" key="1"/>
<evidence type="ECO:0000255" key="2"/>
<evidence type="ECO:0000269" key="3">
    <source>
    </source>
</evidence>
<evidence type="ECO:0000303" key="4">
    <source>
    </source>
</evidence>
<evidence type="ECO:0000305" key="5"/>
<gene>
    <name type="primary">PUMP2</name>
    <name type="synonym">UCP2</name>
    <name type="ordered locus">At5g58970</name>
    <name type="ORF">K19M22.16</name>
</gene>
<comment type="function">
    <text evidence="1">PUMPS are mitochondrial transporter proteins that create proton leaks across the inner mitochondrial membrane, thus uncoupling oxidative phosphorylation. This leads to a decrease in the efficiency of oxidative phosphorylation and an increase in heat production. May be involved in protecting plant cells against oxidative stress damage (By similarity).</text>
</comment>
<comment type="subcellular location">
    <subcellularLocation>
        <location evidence="1">Mitochondrion inner membrane</location>
        <topology evidence="1">Multi-pass membrane protein</topology>
    </subcellularLocation>
</comment>
<comment type="alternative products">
    <event type="alternative splicing"/>
    <isoform>
        <id>Q9ZWG1-1</id>
        <name>1</name>
        <sequence type="displayed"/>
    </isoform>
    <isoform>
        <id>Q9ZWG1-2</id>
        <name>2</name>
        <sequence type="described" ref="VSP_044433 VSP_044434"/>
    </isoform>
</comment>
<comment type="induction">
    <text evidence="3">By chloramphenicol.</text>
</comment>
<comment type="similarity">
    <text evidence="5">Belongs to the mitochondrial carrier (TC 2.A.29) family.</text>
</comment>
<organism>
    <name type="scientific">Arabidopsis thaliana</name>
    <name type="common">Mouse-ear cress</name>
    <dbReference type="NCBI Taxonomy" id="3702"/>
    <lineage>
        <taxon>Eukaryota</taxon>
        <taxon>Viridiplantae</taxon>
        <taxon>Streptophyta</taxon>
        <taxon>Embryophyta</taxon>
        <taxon>Tracheophyta</taxon>
        <taxon>Spermatophyta</taxon>
        <taxon>Magnoliopsida</taxon>
        <taxon>eudicotyledons</taxon>
        <taxon>Gunneridae</taxon>
        <taxon>Pentapetalae</taxon>
        <taxon>rosids</taxon>
        <taxon>malvids</taxon>
        <taxon>Brassicales</taxon>
        <taxon>Brassicaceae</taxon>
        <taxon>Camelineae</taxon>
        <taxon>Arabidopsis</taxon>
    </lineage>
</organism>
<name>PUMP2_ARATH</name>